<proteinExistence type="inferred from homology"/>
<feature type="chain" id="PRO_0000330149" description="NADH-cytochrome b5 reductase 1">
    <location>
        <begin position="1"/>
        <end position="285"/>
    </location>
</feature>
<feature type="transmembrane region" description="Helical" evidence="3">
    <location>
        <begin position="7"/>
        <end position="23"/>
    </location>
</feature>
<feature type="domain" description="FAD-binding FR-type" evidence="4">
    <location>
        <begin position="40"/>
        <end position="144"/>
    </location>
</feature>
<feature type="binding site" evidence="1">
    <location>
        <begin position="124"/>
        <end position="139"/>
    </location>
    <ligand>
        <name>FAD</name>
        <dbReference type="ChEBI" id="CHEBI:57692"/>
    </ligand>
</feature>
<feature type="binding site" evidence="1">
    <location>
        <begin position="150"/>
        <end position="182"/>
    </location>
    <ligand>
        <name>FAD</name>
        <dbReference type="ChEBI" id="CHEBI:57692"/>
    </ligand>
</feature>
<accession>Q6FLT3</accession>
<reference key="1">
    <citation type="journal article" date="2004" name="Nature">
        <title>Genome evolution in yeasts.</title>
        <authorList>
            <person name="Dujon B."/>
            <person name="Sherman D."/>
            <person name="Fischer G."/>
            <person name="Durrens P."/>
            <person name="Casaregola S."/>
            <person name="Lafontaine I."/>
            <person name="de Montigny J."/>
            <person name="Marck C."/>
            <person name="Neuveglise C."/>
            <person name="Talla E."/>
            <person name="Goffard N."/>
            <person name="Frangeul L."/>
            <person name="Aigle M."/>
            <person name="Anthouard V."/>
            <person name="Babour A."/>
            <person name="Barbe V."/>
            <person name="Barnay S."/>
            <person name="Blanchin S."/>
            <person name="Beckerich J.-M."/>
            <person name="Beyne E."/>
            <person name="Bleykasten C."/>
            <person name="Boisrame A."/>
            <person name="Boyer J."/>
            <person name="Cattolico L."/>
            <person name="Confanioleri F."/>
            <person name="de Daruvar A."/>
            <person name="Despons L."/>
            <person name="Fabre E."/>
            <person name="Fairhead C."/>
            <person name="Ferry-Dumazet H."/>
            <person name="Groppi A."/>
            <person name="Hantraye F."/>
            <person name="Hennequin C."/>
            <person name="Jauniaux N."/>
            <person name="Joyet P."/>
            <person name="Kachouri R."/>
            <person name="Kerrest A."/>
            <person name="Koszul R."/>
            <person name="Lemaire M."/>
            <person name="Lesur I."/>
            <person name="Ma L."/>
            <person name="Muller H."/>
            <person name="Nicaud J.-M."/>
            <person name="Nikolski M."/>
            <person name="Oztas S."/>
            <person name="Ozier-Kalogeropoulos O."/>
            <person name="Pellenz S."/>
            <person name="Potier S."/>
            <person name="Richard G.-F."/>
            <person name="Straub M.-L."/>
            <person name="Suleau A."/>
            <person name="Swennen D."/>
            <person name="Tekaia F."/>
            <person name="Wesolowski-Louvel M."/>
            <person name="Westhof E."/>
            <person name="Wirth B."/>
            <person name="Zeniou-Meyer M."/>
            <person name="Zivanovic Y."/>
            <person name="Bolotin-Fukuhara M."/>
            <person name="Thierry A."/>
            <person name="Bouchier C."/>
            <person name="Caudron B."/>
            <person name="Scarpelli C."/>
            <person name="Gaillardin C."/>
            <person name="Weissenbach J."/>
            <person name="Wincker P."/>
            <person name="Souciet J.-L."/>
        </authorList>
    </citation>
    <scope>NUCLEOTIDE SEQUENCE [LARGE SCALE GENOMIC DNA]</scope>
    <source>
        <strain>ATCC 2001 / BCRC 20586 / JCM 3761 / NBRC 0622 / NRRL Y-65 / CBS 138</strain>
    </source>
</reference>
<sequence length="285" mass="31937">MDGIKILATFSVLVLFYKLFTYSKKGGVSQKEAVKALLKTEFREFELVEKEQLTHNTAKYKFKLADESHVLGLPIGQHITVKTIIGGKPVSRSYTPTSLDEECVGFFELLVKSYPEGNISKHIGDMKIGEKINISGPRGFYEYVPNVHKHLAMVAGGTGITPMFQIMKAIARDPSDKTRVTLLYGNVLEEDILLKQELDDLVKQRPDQFKITYLLDKPERDDWEGGVGYVTLDLMKESFPSAEEDVQLLVCGPPGMVSSVKRNAVALGFPRAKPVSKMEDRVFVF</sequence>
<keyword id="KW-0274">FAD</keyword>
<keyword id="KW-0285">Flavoprotein</keyword>
<keyword id="KW-0472">Membrane</keyword>
<keyword id="KW-0496">Mitochondrion</keyword>
<keyword id="KW-1000">Mitochondrion outer membrane</keyword>
<keyword id="KW-0520">NAD</keyword>
<keyword id="KW-0560">Oxidoreductase</keyword>
<keyword id="KW-1185">Reference proteome</keyword>
<keyword id="KW-0808">Transferase</keyword>
<keyword id="KW-0812">Transmembrane</keyword>
<keyword id="KW-1133">Transmembrane helix</keyword>
<protein>
    <recommendedName>
        <fullName>NADH-cytochrome b5 reductase 1</fullName>
        <ecNumber evidence="2">1.6.2.2</ecNumber>
    </recommendedName>
    <alternativeName>
        <fullName>Microsomal cytochrome b reductase</fullName>
    </alternativeName>
</protein>
<dbReference type="EC" id="1.6.2.2" evidence="2"/>
<dbReference type="EMBL" id="CR380958">
    <property type="protein sequence ID" value="CAG61781.1"/>
    <property type="molecule type" value="Genomic_DNA"/>
</dbReference>
<dbReference type="RefSeq" id="XP_448811.1">
    <property type="nucleotide sequence ID" value="XM_448811.1"/>
</dbReference>
<dbReference type="SMR" id="Q6FLT3"/>
<dbReference type="FunCoup" id="Q6FLT3">
    <property type="interactions" value="274"/>
</dbReference>
<dbReference type="STRING" id="284593.Q6FLT3"/>
<dbReference type="EnsemblFungi" id="CAGL0L00847g-T">
    <property type="protein sequence ID" value="CAGL0L00847g-T-p1"/>
    <property type="gene ID" value="CAGL0L00847g"/>
</dbReference>
<dbReference type="KEGG" id="cgr:2890933"/>
<dbReference type="CGD" id="CAL0134988">
    <property type="gene designation" value="CAGL0L00847g"/>
</dbReference>
<dbReference type="VEuPathDB" id="FungiDB:CAGL0L00847g"/>
<dbReference type="eggNOG" id="KOG0534">
    <property type="taxonomic scope" value="Eukaryota"/>
</dbReference>
<dbReference type="HOGENOM" id="CLU_003827_9_0_1"/>
<dbReference type="InParanoid" id="Q6FLT3"/>
<dbReference type="OMA" id="VQIFMCG"/>
<dbReference type="UniPathway" id="UPA00559"/>
<dbReference type="Proteomes" id="UP000002428">
    <property type="component" value="Chromosome L"/>
</dbReference>
<dbReference type="GO" id="GO:0005783">
    <property type="term" value="C:endoplasmic reticulum"/>
    <property type="evidence" value="ECO:0007669"/>
    <property type="project" value="TreeGrafter"/>
</dbReference>
<dbReference type="GO" id="GO:0005741">
    <property type="term" value="C:mitochondrial outer membrane"/>
    <property type="evidence" value="ECO:0007669"/>
    <property type="project" value="UniProtKB-SubCell"/>
</dbReference>
<dbReference type="GO" id="GO:0005886">
    <property type="term" value="C:plasma membrane"/>
    <property type="evidence" value="ECO:0007669"/>
    <property type="project" value="TreeGrafter"/>
</dbReference>
<dbReference type="GO" id="GO:0090560">
    <property type="term" value="F:2-(3-amino-3-carboxypropyl)histidine synthase activity"/>
    <property type="evidence" value="ECO:0007669"/>
    <property type="project" value="EnsemblFungi"/>
</dbReference>
<dbReference type="GO" id="GO:0004128">
    <property type="term" value="F:cytochrome-b5 reductase activity, acting on NAD(P)H"/>
    <property type="evidence" value="ECO:0000250"/>
    <property type="project" value="UniProtKB"/>
</dbReference>
<dbReference type="GO" id="GO:0003954">
    <property type="term" value="F:NADH dehydrogenase activity"/>
    <property type="evidence" value="ECO:0000250"/>
    <property type="project" value="UniProtKB"/>
</dbReference>
<dbReference type="GO" id="GO:0017183">
    <property type="term" value="P:protein histidyl modification to diphthamide"/>
    <property type="evidence" value="ECO:0000250"/>
    <property type="project" value="UniProtKB"/>
</dbReference>
<dbReference type="GO" id="GO:0002926">
    <property type="term" value="P:tRNA wobble base 5-methoxycarbonylmethyl-2-thiouridinylation"/>
    <property type="evidence" value="ECO:0000250"/>
    <property type="project" value="UniProtKB"/>
</dbReference>
<dbReference type="CDD" id="cd06183">
    <property type="entry name" value="cyt_b5_reduct_like"/>
    <property type="match status" value="1"/>
</dbReference>
<dbReference type="FunFam" id="2.40.30.10:FF:000032">
    <property type="entry name" value="NADH-cytochrome b5 reductase"/>
    <property type="match status" value="1"/>
</dbReference>
<dbReference type="FunFam" id="3.40.50.80:FF:000009">
    <property type="entry name" value="NADH-cytochrome b5 reductase"/>
    <property type="match status" value="1"/>
</dbReference>
<dbReference type="Gene3D" id="3.40.50.80">
    <property type="entry name" value="Nucleotide-binding domain of ferredoxin-NADP reductase (FNR) module"/>
    <property type="match status" value="1"/>
</dbReference>
<dbReference type="Gene3D" id="2.40.30.10">
    <property type="entry name" value="Translation factors"/>
    <property type="match status" value="1"/>
</dbReference>
<dbReference type="InterPro" id="IPR001834">
    <property type="entry name" value="CBR-like"/>
</dbReference>
<dbReference type="InterPro" id="IPR008333">
    <property type="entry name" value="Cbr1-like_FAD-bd_dom"/>
</dbReference>
<dbReference type="InterPro" id="IPR017927">
    <property type="entry name" value="FAD-bd_FR_type"/>
</dbReference>
<dbReference type="InterPro" id="IPR001709">
    <property type="entry name" value="Flavoprot_Pyr_Nucl_cyt_Rdtase"/>
</dbReference>
<dbReference type="InterPro" id="IPR039261">
    <property type="entry name" value="FNR_nucleotide-bd"/>
</dbReference>
<dbReference type="InterPro" id="IPR001433">
    <property type="entry name" value="OxRdtase_FAD/NAD-bd"/>
</dbReference>
<dbReference type="InterPro" id="IPR017938">
    <property type="entry name" value="Riboflavin_synthase-like_b-brl"/>
</dbReference>
<dbReference type="PANTHER" id="PTHR19370">
    <property type="entry name" value="NADH-CYTOCHROME B5 REDUCTASE"/>
    <property type="match status" value="1"/>
</dbReference>
<dbReference type="PANTHER" id="PTHR19370:SF184">
    <property type="entry name" value="NADH-CYTOCHROME B5 REDUCTASE-LIKE"/>
    <property type="match status" value="1"/>
</dbReference>
<dbReference type="Pfam" id="PF00970">
    <property type="entry name" value="FAD_binding_6"/>
    <property type="match status" value="1"/>
</dbReference>
<dbReference type="Pfam" id="PF00175">
    <property type="entry name" value="NAD_binding_1"/>
    <property type="match status" value="1"/>
</dbReference>
<dbReference type="PRINTS" id="PR00406">
    <property type="entry name" value="CYTB5RDTASE"/>
</dbReference>
<dbReference type="PRINTS" id="PR00371">
    <property type="entry name" value="FPNCR"/>
</dbReference>
<dbReference type="SUPFAM" id="SSF52343">
    <property type="entry name" value="Ferredoxin reductase-like, C-terminal NADP-linked domain"/>
    <property type="match status" value="1"/>
</dbReference>
<dbReference type="SUPFAM" id="SSF63380">
    <property type="entry name" value="Riboflavin synthase domain-like"/>
    <property type="match status" value="1"/>
</dbReference>
<dbReference type="PROSITE" id="PS51384">
    <property type="entry name" value="FAD_FR"/>
    <property type="match status" value="1"/>
</dbReference>
<name>NCB5R_CANGA</name>
<gene>
    <name type="primary">CBR1</name>
    <name type="ordered locus">CAGL0L00847g</name>
</gene>
<organism>
    <name type="scientific">Candida glabrata (strain ATCC 2001 / BCRC 20586 / JCM 3761 / NBRC 0622 / NRRL Y-65 / CBS 138)</name>
    <name type="common">Yeast</name>
    <name type="synonym">Nakaseomyces glabratus</name>
    <dbReference type="NCBI Taxonomy" id="284593"/>
    <lineage>
        <taxon>Eukaryota</taxon>
        <taxon>Fungi</taxon>
        <taxon>Dikarya</taxon>
        <taxon>Ascomycota</taxon>
        <taxon>Saccharomycotina</taxon>
        <taxon>Saccharomycetes</taxon>
        <taxon>Saccharomycetales</taxon>
        <taxon>Saccharomycetaceae</taxon>
        <taxon>Nakaseomyces</taxon>
    </lineage>
</organism>
<comment type="function">
    <text evidence="2">NADH-dependent reductase for DPH3 and cytochrome b5. Required for the first step of diphthamide biosynthesis, a post-translational modification of histidine which occurs in elongation factor 2. DPH1 and DPH2 transfer a 3-amino-3-carboxypropyl (ACP) group from S-adenosyl-L-methionine (SAM) to a histidine residue, the reaction is assisted by a reduction system comprising DPH3 and a NADH-dependent reductase, predominantly CBR1. By reducing DPH3, also involved in the formation of the tRNA wobble base modification mcm5s 2U (5-methoxycarbonylmethyl-2-thiouridine), mediated by the elongator complex. The cytochrome b5/NADH cytochrome b5 reductase electron transfer system supports the catalytic activity of several sterol biosynthetic enzymes.</text>
</comment>
<comment type="catalytic activity">
    <reaction evidence="2">
        <text>2 Fe(III)-[cytochrome b5] + NADH = 2 Fe(II)-[cytochrome b5] + NAD(+) + H(+)</text>
        <dbReference type="Rhea" id="RHEA:46680"/>
        <dbReference type="Rhea" id="RHEA-COMP:10438"/>
        <dbReference type="Rhea" id="RHEA-COMP:10439"/>
        <dbReference type="ChEBI" id="CHEBI:15378"/>
        <dbReference type="ChEBI" id="CHEBI:29033"/>
        <dbReference type="ChEBI" id="CHEBI:29034"/>
        <dbReference type="ChEBI" id="CHEBI:57540"/>
        <dbReference type="ChEBI" id="CHEBI:57945"/>
        <dbReference type="EC" id="1.6.2.2"/>
    </reaction>
</comment>
<comment type="catalytic activity">
    <reaction evidence="2">
        <text>2 Fe(3+)-[Dph3] + NADH = 2 Fe(2+)-[Dph3] + NAD(+) + H(+)</text>
        <dbReference type="Rhea" id="RHEA:71231"/>
        <dbReference type="Rhea" id="RHEA-COMP:18002"/>
        <dbReference type="Rhea" id="RHEA-COMP:18003"/>
        <dbReference type="ChEBI" id="CHEBI:15378"/>
        <dbReference type="ChEBI" id="CHEBI:29033"/>
        <dbReference type="ChEBI" id="CHEBI:29034"/>
        <dbReference type="ChEBI" id="CHEBI:57540"/>
        <dbReference type="ChEBI" id="CHEBI:57945"/>
        <dbReference type="ChEBI" id="CHEBI:83228"/>
    </reaction>
    <physiologicalReaction direction="left-to-right" evidence="2">
        <dbReference type="Rhea" id="RHEA:71232"/>
    </physiologicalReaction>
</comment>
<comment type="cofactor">
    <cofactor evidence="3">
        <name>FAD</name>
        <dbReference type="ChEBI" id="CHEBI:57692"/>
    </cofactor>
</comment>
<comment type="pathway">
    <text evidence="2">Protein modification; peptidyl-diphthamide biosynthesis.</text>
</comment>
<comment type="subunit">
    <text evidence="2">Monomer. Component of the 2-(3-amino-3-carboxypropyl)histidine synthase complex composed of DPH1, DPH2, DPH3 and a NADH-dependent reductase, predominantly CBR1.</text>
</comment>
<comment type="subcellular location">
    <subcellularLocation>
        <location evidence="2">Mitochondrion outer membrane</location>
        <topology evidence="3">Single-pass membrane protein</topology>
    </subcellularLocation>
</comment>
<comment type="similarity">
    <text evidence="5">Belongs to the flavoprotein pyridine nucleotide cytochrome reductase family.</text>
</comment>
<evidence type="ECO:0000250" key="1"/>
<evidence type="ECO:0000250" key="2">
    <source>
        <dbReference type="UniProtKB" id="P38626"/>
    </source>
</evidence>
<evidence type="ECO:0000255" key="3"/>
<evidence type="ECO:0000255" key="4">
    <source>
        <dbReference type="PROSITE-ProRule" id="PRU00716"/>
    </source>
</evidence>
<evidence type="ECO:0000305" key="5"/>